<protein>
    <recommendedName>
        <fullName evidence="1">Glucose-6-phosphate isomerase</fullName>
        <shortName evidence="1">GPI</shortName>
        <ecNumber evidence="1">5.3.1.9</ecNumber>
    </recommendedName>
    <alternativeName>
        <fullName evidence="1">Phosphoglucose isomerase</fullName>
        <shortName evidence="1">PGI</shortName>
    </alternativeName>
    <alternativeName>
        <fullName evidence="1">Phosphohexose isomerase</fullName>
        <shortName evidence="1">PHI</shortName>
    </alternativeName>
</protein>
<keyword id="KW-0963">Cytoplasm</keyword>
<keyword id="KW-0312">Gluconeogenesis</keyword>
<keyword id="KW-0324">Glycolysis</keyword>
<keyword id="KW-0413">Isomerase</keyword>
<proteinExistence type="inferred from homology"/>
<dbReference type="EC" id="5.3.1.9" evidence="1"/>
<dbReference type="EMBL" id="CP000738">
    <property type="protein sequence ID" value="ABR58969.1"/>
    <property type="molecule type" value="Genomic_DNA"/>
</dbReference>
<dbReference type="RefSeq" id="WP_011974322.1">
    <property type="nucleotide sequence ID" value="NC_009636.1"/>
</dbReference>
<dbReference type="RefSeq" id="YP_001325804.1">
    <property type="nucleotide sequence ID" value="NC_009636.1"/>
</dbReference>
<dbReference type="SMR" id="A6U5N9"/>
<dbReference type="STRING" id="366394.Smed_0109"/>
<dbReference type="KEGG" id="smd:Smed_0109"/>
<dbReference type="PATRIC" id="fig|366394.8.peg.3165"/>
<dbReference type="eggNOG" id="COG0166">
    <property type="taxonomic scope" value="Bacteria"/>
</dbReference>
<dbReference type="HOGENOM" id="CLU_017947_3_1_5"/>
<dbReference type="OrthoDB" id="140919at2"/>
<dbReference type="UniPathway" id="UPA00109">
    <property type="reaction ID" value="UER00181"/>
</dbReference>
<dbReference type="UniPathway" id="UPA00138"/>
<dbReference type="Proteomes" id="UP000001108">
    <property type="component" value="Chromosome"/>
</dbReference>
<dbReference type="GO" id="GO:0005829">
    <property type="term" value="C:cytosol"/>
    <property type="evidence" value="ECO:0007669"/>
    <property type="project" value="TreeGrafter"/>
</dbReference>
<dbReference type="GO" id="GO:0097367">
    <property type="term" value="F:carbohydrate derivative binding"/>
    <property type="evidence" value="ECO:0007669"/>
    <property type="project" value="InterPro"/>
</dbReference>
<dbReference type="GO" id="GO:0004347">
    <property type="term" value="F:glucose-6-phosphate isomerase activity"/>
    <property type="evidence" value="ECO:0007669"/>
    <property type="project" value="UniProtKB-UniRule"/>
</dbReference>
<dbReference type="GO" id="GO:0048029">
    <property type="term" value="F:monosaccharide binding"/>
    <property type="evidence" value="ECO:0007669"/>
    <property type="project" value="TreeGrafter"/>
</dbReference>
<dbReference type="GO" id="GO:0006094">
    <property type="term" value="P:gluconeogenesis"/>
    <property type="evidence" value="ECO:0007669"/>
    <property type="project" value="UniProtKB-UniRule"/>
</dbReference>
<dbReference type="GO" id="GO:0051156">
    <property type="term" value="P:glucose 6-phosphate metabolic process"/>
    <property type="evidence" value="ECO:0007669"/>
    <property type="project" value="TreeGrafter"/>
</dbReference>
<dbReference type="GO" id="GO:0006096">
    <property type="term" value="P:glycolytic process"/>
    <property type="evidence" value="ECO:0007669"/>
    <property type="project" value="UniProtKB-UniRule"/>
</dbReference>
<dbReference type="CDD" id="cd05015">
    <property type="entry name" value="SIS_PGI_1"/>
    <property type="match status" value="1"/>
</dbReference>
<dbReference type="CDD" id="cd05016">
    <property type="entry name" value="SIS_PGI_2"/>
    <property type="match status" value="1"/>
</dbReference>
<dbReference type="FunFam" id="3.40.50.10490:FF:000018">
    <property type="entry name" value="Glucose-6-phosphate isomerase"/>
    <property type="match status" value="1"/>
</dbReference>
<dbReference type="Gene3D" id="1.10.1390.10">
    <property type="match status" value="1"/>
</dbReference>
<dbReference type="Gene3D" id="3.40.50.10490">
    <property type="entry name" value="Glucose-6-phosphate isomerase like protein, domain 1"/>
    <property type="match status" value="2"/>
</dbReference>
<dbReference type="HAMAP" id="MF_00473">
    <property type="entry name" value="G6P_isomerase"/>
    <property type="match status" value="1"/>
</dbReference>
<dbReference type="InterPro" id="IPR001672">
    <property type="entry name" value="G6P_Isomerase"/>
</dbReference>
<dbReference type="InterPro" id="IPR023096">
    <property type="entry name" value="G6P_Isomerase_C"/>
</dbReference>
<dbReference type="InterPro" id="IPR018189">
    <property type="entry name" value="Phosphoglucose_isomerase_CS"/>
</dbReference>
<dbReference type="InterPro" id="IPR046348">
    <property type="entry name" value="SIS_dom_sf"/>
</dbReference>
<dbReference type="InterPro" id="IPR035476">
    <property type="entry name" value="SIS_PGI_1"/>
</dbReference>
<dbReference type="InterPro" id="IPR035482">
    <property type="entry name" value="SIS_PGI_2"/>
</dbReference>
<dbReference type="NCBIfam" id="NF001211">
    <property type="entry name" value="PRK00179.1"/>
    <property type="match status" value="1"/>
</dbReference>
<dbReference type="PANTHER" id="PTHR11469">
    <property type="entry name" value="GLUCOSE-6-PHOSPHATE ISOMERASE"/>
    <property type="match status" value="1"/>
</dbReference>
<dbReference type="PANTHER" id="PTHR11469:SF1">
    <property type="entry name" value="GLUCOSE-6-PHOSPHATE ISOMERASE"/>
    <property type="match status" value="1"/>
</dbReference>
<dbReference type="Pfam" id="PF00342">
    <property type="entry name" value="PGI"/>
    <property type="match status" value="1"/>
</dbReference>
<dbReference type="PRINTS" id="PR00662">
    <property type="entry name" value="G6PISOMERASE"/>
</dbReference>
<dbReference type="SUPFAM" id="SSF53697">
    <property type="entry name" value="SIS domain"/>
    <property type="match status" value="1"/>
</dbReference>
<dbReference type="PROSITE" id="PS00765">
    <property type="entry name" value="P_GLUCOSE_ISOMERASE_1"/>
    <property type="match status" value="1"/>
</dbReference>
<dbReference type="PROSITE" id="PS00174">
    <property type="entry name" value="P_GLUCOSE_ISOMERASE_2"/>
    <property type="match status" value="1"/>
</dbReference>
<dbReference type="PROSITE" id="PS51463">
    <property type="entry name" value="P_GLUCOSE_ISOMERASE_3"/>
    <property type="match status" value="1"/>
</dbReference>
<accession>A6U5N9</accession>
<evidence type="ECO:0000255" key="1">
    <source>
        <dbReference type="HAMAP-Rule" id="MF_00473"/>
    </source>
</evidence>
<reference key="1">
    <citation type="submission" date="2007-06" db="EMBL/GenBank/DDBJ databases">
        <title>Complete sequence of Sinorhizobium medicae WSM419 chromosome.</title>
        <authorList>
            <consortium name="US DOE Joint Genome Institute"/>
            <person name="Copeland A."/>
            <person name="Lucas S."/>
            <person name="Lapidus A."/>
            <person name="Barry K."/>
            <person name="Glavina del Rio T."/>
            <person name="Dalin E."/>
            <person name="Tice H."/>
            <person name="Pitluck S."/>
            <person name="Chain P."/>
            <person name="Malfatti S."/>
            <person name="Shin M."/>
            <person name="Vergez L."/>
            <person name="Schmutz J."/>
            <person name="Larimer F."/>
            <person name="Land M."/>
            <person name="Hauser L."/>
            <person name="Kyrpides N."/>
            <person name="Mikhailova N."/>
            <person name="Reeve W.G."/>
            <person name="Richardson P."/>
        </authorList>
    </citation>
    <scope>NUCLEOTIDE SEQUENCE [LARGE SCALE GENOMIC DNA]</scope>
    <source>
        <strain>WSM419</strain>
    </source>
</reference>
<sequence>MKALVENLKATARETDATDIRAAFAADPNRFSRFSTALDDLLFDYSKCAVNDRIIDGLEALAKAAKVEEKRDAMFRGDIINITEERAVLHTALRNRSNRPVLVDGKNVVPDVNAVLEAMGRFADHVRSGDLKGATGKKITDVVNIGIGGSDLGPVMATLALAPFHDGPRLHFVSNVDGAHIADTLKLLDAETSLFIVASKTFTTIETMTNAATARAFIAGKLGEAAVGHHFAAVSTALDKVGAFGINAARVFGFWDWVGGRYSIWSAIGLPLMIAIGKENFGRFLDGGHSMDEHFRAAPLRQNIPVLLGLIGFYNRNVLGYPSRAILPYDQRLTRFPAYLQQLDMESNGKGVTLESQPVEFSTGPVVWGEPGTNGQHAFYQLIHQGTDIIPAEFMIAAKGHEKDLRHQHQLLIANCLAQSEALMKGRTLAEAKAQLTSKGMDEAKADKIAPHRVFTGNRPSLTIVYDQLDPFALGRLIALYEHRVFVEGALFNINSFDQWGVELGKELATGLLPVVEGRESAEGHDSSTTGLVAALLKAAR</sequence>
<gene>
    <name evidence="1" type="primary">pgi</name>
    <name type="ordered locus">Smed_0109</name>
</gene>
<name>G6PI_SINMW</name>
<comment type="function">
    <text evidence="1">Catalyzes the reversible isomerization of glucose-6-phosphate to fructose-6-phosphate.</text>
</comment>
<comment type="catalytic activity">
    <reaction evidence="1">
        <text>alpha-D-glucose 6-phosphate = beta-D-fructose 6-phosphate</text>
        <dbReference type="Rhea" id="RHEA:11816"/>
        <dbReference type="ChEBI" id="CHEBI:57634"/>
        <dbReference type="ChEBI" id="CHEBI:58225"/>
        <dbReference type="EC" id="5.3.1.9"/>
    </reaction>
</comment>
<comment type="pathway">
    <text evidence="1">Carbohydrate biosynthesis; gluconeogenesis.</text>
</comment>
<comment type="pathway">
    <text evidence="1">Carbohydrate degradation; glycolysis; D-glyceraldehyde 3-phosphate and glycerone phosphate from D-glucose: step 2/4.</text>
</comment>
<comment type="subcellular location">
    <subcellularLocation>
        <location evidence="1">Cytoplasm</location>
    </subcellularLocation>
</comment>
<comment type="similarity">
    <text evidence="1">Belongs to the GPI family.</text>
</comment>
<organism>
    <name type="scientific">Sinorhizobium medicae (strain WSM419)</name>
    <name type="common">Ensifer medicae</name>
    <dbReference type="NCBI Taxonomy" id="366394"/>
    <lineage>
        <taxon>Bacteria</taxon>
        <taxon>Pseudomonadati</taxon>
        <taxon>Pseudomonadota</taxon>
        <taxon>Alphaproteobacteria</taxon>
        <taxon>Hyphomicrobiales</taxon>
        <taxon>Rhizobiaceae</taxon>
        <taxon>Sinorhizobium/Ensifer group</taxon>
        <taxon>Sinorhizobium</taxon>
    </lineage>
</organism>
<feature type="chain" id="PRO_1000014023" description="Glucose-6-phosphate isomerase">
    <location>
        <begin position="1"/>
        <end position="541"/>
    </location>
</feature>
<feature type="active site" description="Proton donor" evidence="1">
    <location>
        <position position="346"/>
    </location>
</feature>
<feature type="active site" evidence="1">
    <location>
        <position position="377"/>
    </location>
</feature>
<feature type="active site" evidence="1">
    <location>
        <position position="506"/>
    </location>
</feature>